<evidence type="ECO:0000255" key="1">
    <source>
        <dbReference type="HAMAP-Rule" id="MF_00014"/>
    </source>
</evidence>
<feature type="chain" id="PRO_0000244157" description="Ribosome maturation factor RimM">
    <location>
        <begin position="1"/>
        <end position="187"/>
    </location>
</feature>
<feature type="domain" description="PRC barrel" evidence="1">
    <location>
        <begin position="111"/>
        <end position="187"/>
    </location>
</feature>
<dbReference type="EMBL" id="CP000267">
    <property type="protein sequence ID" value="ABD69136.1"/>
    <property type="molecule type" value="Genomic_DNA"/>
</dbReference>
<dbReference type="RefSeq" id="WP_011463704.1">
    <property type="nucleotide sequence ID" value="NC_007908.1"/>
</dbReference>
<dbReference type="SMR" id="Q21YL7"/>
<dbReference type="STRING" id="338969.Rfer_1403"/>
<dbReference type="KEGG" id="rfr:Rfer_1403"/>
<dbReference type="eggNOG" id="COG0806">
    <property type="taxonomic scope" value="Bacteria"/>
</dbReference>
<dbReference type="HOGENOM" id="CLU_077636_1_0_4"/>
<dbReference type="OrthoDB" id="9783509at2"/>
<dbReference type="Proteomes" id="UP000008332">
    <property type="component" value="Chromosome"/>
</dbReference>
<dbReference type="GO" id="GO:0005737">
    <property type="term" value="C:cytoplasm"/>
    <property type="evidence" value="ECO:0007669"/>
    <property type="project" value="UniProtKB-SubCell"/>
</dbReference>
<dbReference type="GO" id="GO:0005840">
    <property type="term" value="C:ribosome"/>
    <property type="evidence" value="ECO:0007669"/>
    <property type="project" value="InterPro"/>
</dbReference>
<dbReference type="GO" id="GO:0043022">
    <property type="term" value="F:ribosome binding"/>
    <property type="evidence" value="ECO:0007669"/>
    <property type="project" value="InterPro"/>
</dbReference>
<dbReference type="GO" id="GO:0042274">
    <property type="term" value="P:ribosomal small subunit biogenesis"/>
    <property type="evidence" value="ECO:0007669"/>
    <property type="project" value="UniProtKB-UniRule"/>
</dbReference>
<dbReference type="GO" id="GO:0006364">
    <property type="term" value="P:rRNA processing"/>
    <property type="evidence" value="ECO:0007669"/>
    <property type="project" value="UniProtKB-UniRule"/>
</dbReference>
<dbReference type="Gene3D" id="2.30.30.240">
    <property type="entry name" value="PRC-barrel domain"/>
    <property type="match status" value="1"/>
</dbReference>
<dbReference type="Gene3D" id="2.40.30.60">
    <property type="entry name" value="RimM"/>
    <property type="match status" value="1"/>
</dbReference>
<dbReference type="HAMAP" id="MF_00014">
    <property type="entry name" value="Ribosome_mat_RimM"/>
    <property type="match status" value="1"/>
</dbReference>
<dbReference type="InterPro" id="IPR011033">
    <property type="entry name" value="PRC_barrel-like_sf"/>
</dbReference>
<dbReference type="InterPro" id="IPR056792">
    <property type="entry name" value="PRC_RimM"/>
</dbReference>
<dbReference type="InterPro" id="IPR011961">
    <property type="entry name" value="RimM"/>
</dbReference>
<dbReference type="InterPro" id="IPR002676">
    <property type="entry name" value="RimM_N"/>
</dbReference>
<dbReference type="InterPro" id="IPR036976">
    <property type="entry name" value="RimM_N_sf"/>
</dbReference>
<dbReference type="InterPro" id="IPR009000">
    <property type="entry name" value="Transl_B-barrel_sf"/>
</dbReference>
<dbReference type="NCBIfam" id="TIGR02273">
    <property type="entry name" value="16S_RimM"/>
    <property type="match status" value="1"/>
</dbReference>
<dbReference type="PANTHER" id="PTHR33692">
    <property type="entry name" value="RIBOSOME MATURATION FACTOR RIMM"/>
    <property type="match status" value="1"/>
</dbReference>
<dbReference type="PANTHER" id="PTHR33692:SF1">
    <property type="entry name" value="RIBOSOME MATURATION FACTOR RIMM"/>
    <property type="match status" value="1"/>
</dbReference>
<dbReference type="Pfam" id="PF24986">
    <property type="entry name" value="PRC_RimM"/>
    <property type="match status" value="1"/>
</dbReference>
<dbReference type="Pfam" id="PF01782">
    <property type="entry name" value="RimM"/>
    <property type="match status" value="1"/>
</dbReference>
<dbReference type="SUPFAM" id="SSF50346">
    <property type="entry name" value="PRC-barrel domain"/>
    <property type="match status" value="1"/>
</dbReference>
<dbReference type="SUPFAM" id="SSF50447">
    <property type="entry name" value="Translation proteins"/>
    <property type="match status" value="1"/>
</dbReference>
<reference key="1">
    <citation type="submission" date="2006-02" db="EMBL/GenBank/DDBJ databases">
        <title>Complete sequence of chromosome of Rhodoferax ferrireducens DSM 15236.</title>
        <authorList>
            <person name="Copeland A."/>
            <person name="Lucas S."/>
            <person name="Lapidus A."/>
            <person name="Barry K."/>
            <person name="Detter J.C."/>
            <person name="Glavina del Rio T."/>
            <person name="Hammon N."/>
            <person name="Israni S."/>
            <person name="Pitluck S."/>
            <person name="Brettin T."/>
            <person name="Bruce D."/>
            <person name="Han C."/>
            <person name="Tapia R."/>
            <person name="Gilna P."/>
            <person name="Kiss H."/>
            <person name="Schmutz J."/>
            <person name="Larimer F."/>
            <person name="Land M."/>
            <person name="Kyrpides N."/>
            <person name="Ivanova N."/>
            <person name="Richardson P."/>
        </authorList>
    </citation>
    <scope>NUCLEOTIDE SEQUENCE [LARGE SCALE GENOMIC DNA]</scope>
    <source>
        <strain>ATCC BAA-621 / DSM 15236 / T118</strain>
    </source>
</reference>
<keyword id="KW-0143">Chaperone</keyword>
<keyword id="KW-0963">Cytoplasm</keyword>
<keyword id="KW-1185">Reference proteome</keyword>
<keyword id="KW-0690">Ribosome biogenesis</keyword>
<keyword id="KW-0698">rRNA processing</keyword>
<name>RIMM_ALBFT</name>
<proteinExistence type="inferred from homology"/>
<accession>Q21YL7</accession>
<protein>
    <recommendedName>
        <fullName evidence="1">Ribosome maturation factor RimM</fullName>
    </recommendedName>
</protein>
<gene>
    <name evidence="1" type="primary">rimM</name>
    <name type="ordered locus">Rfer_1403</name>
</gene>
<sequence length="187" mass="20454">MLPGLEAAELPADAIEVGRIADAWGIKGWFKVLPYSADPEALFSARRWFLLPAEKGAKTFSGVAQLAIKEAKVHSDTVVASAQAVDDRTAAEALRGARIFVARSSFPSAEKDEYYWVDLIGLNVVNREGVAMGTVKELLSTGAQTVLVLEYSQDGKAQERMIPFVSVYIDEVDLPGHRILVDWQADF</sequence>
<organism>
    <name type="scientific">Albidiferax ferrireducens (strain ATCC BAA-621 / DSM 15236 / T118)</name>
    <name type="common">Rhodoferax ferrireducens</name>
    <dbReference type="NCBI Taxonomy" id="338969"/>
    <lineage>
        <taxon>Bacteria</taxon>
        <taxon>Pseudomonadati</taxon>
        <taxon>Pseudomonadota</taxon>
        <taxon>Betaproteobacteria</taxon>
        <taxon>Burkholderiales</taxon>
        <taxon>Comamonadaceae</taxon>
        <taxon>Rhodoferax</taxon>
    </lineage>
</organism>
<comment type="function">
    <text evidence="1">An accessory protein needed during the final step in the assembly of 30S ribosomal subunit, possibly for assembly of the head region. Essential for efficient processing of 16S rRNA. May be needed both before and after RbfA during the maturation of 16S rRNA. It has affinity for free ribosomal 30S subunits but not for 70S ribosomes.</text>
</comment>
<comment type="subunit">
    <text evidence="1">Binds ribosomal protein uS19.</text>
</comment>
<comment type="subcellular location">
    <subcellularLocation>
        <location evidence="1">Cytoplasm</location>
    </subcellularLocation>
</comment>
<comment type="domain">
    <text evidence="1">The PRC barrel domain binds ribosomal protein uS19.</text>
</comment>
<comment type="similarity">
    <text evidence="1">Belongs to the RimM family.</text>
</comment>